<name>Y1310_RHIME</name>
<comment type="similarity">
    <text evidence="1">Belongs to the UPF0173 family.</text>
</comment>
<evidence type="ECO:0000255" key="1">
    <source>
        <dbReference type="HAMAP-Rule" id="MF_00457"/>
    </source>
</evidence>
<organism>
    <name type="scientific">Rhizobium meliloti (strain 1021)</name>
    <name type="common">Ensifer meliloti</name>
    <name type="synonym">Sinorhizobium meliloti</name>
    <dbReference type="NCBI Taxonomy" id="266834"/>
    <lineage>
        <taxon>Bacteria</taxon>
        <taxon>Pseudomonadati</taxon>
        <taxon>Pseudomonadota</taxon>
        <taxon>Alphaproteobacteria</taxon>
        <taxon>Hyphomicrobiales</taxon>
        <taxon>Rhizobiaceae</taxon>
        <taxon>Sinorhizobium/Ensifer group</taxon>
        <taxon>Sinorhizobium</taxon>
    </lineage>
</organism>
<protein>
    <recommendedName>
        <fullName evidence="1">UPF0173 metal-dependent hydrolase R01310</fullName>
    </recommendedName>
</protein>
<keyword id="KW-0378">Hydrolase</keyword>
<keyword id="KW-1185">Reference proteome</keyword>
<feature type="chain" id="PRO_0000367206" description="UPF0173 metal-dependent hydrolase R01310">
    <location>
        <begin position="1"/>
        <end position="234"/>
    </location>
</feature>
<accession>Q92QK9</accession>
<reference key="1">
    <citation type="journal article" date="2001" name="Proc. Natl. Acad. Sci. U.S.A.">
        <title>Analysis of the chromosome sequence of the legume symbiont Sinorhizobium meliloti strain 1021.</title>
        <authorList>
            <person name="Capela D."/>
            <person name="Barloy-Hubler F."/>
            <person name="Gouzy J."/>
            <person name="Bothe G."/>
            <person name="Ampe F."/>
            <person name="Batut J."/>
            <person name="Boistard P."/>
            <person name="Becker A."/>
            <person name="Boutry M."/>
            <person name="Cadieu E."/>
            <person name="Dreano S."/>
            <person name="Gloux S."/>
            <person name="Godrie T."/>
            <person name="Goffeau A."/>
            <person name="Kahn D."/>
            <person name="Kiss E."/>
            <person name="Lelaure V."/>
            <person name="Masuy D."/>
            <person name="Pohl T."/>
            <person name="Portetelle D."/>
            <person name="Puehler A."/>
            <person name="Purnelle B."/>
            <person name="Ramsperger U."/>
            <person name="Renard C."/>
            <person name="Thebault P."/>
            <person name="Vandenbol M."/>
            <person name="Weidner S."/>
            <person name="Galibert F."/>
        </authorList>
    </citation>
    <scope>NUCLEOTIDE SEQUENCE [LARGE SCALE GENOMIC DNA]</scope>
    <source>
        <strain>1021</strain>
    </source>
</reference>
<reference key="2">
    <citation type="journal article" date="2001" name="Science">
        <title>The composite genome of the legume symbiont Sinorhizobium meliloti.</title>
        <authorList>
            <person name="Galibert F."/>
            <person name="Finan T.M."/>
            <person name="Long S.R."/>
            <person name="Puehler A."/>
            <person name="Abola P."/>
            <person name="Ampe F."/>
            <person name="Barloy-Hubler F."/>
            <person name="Barnett M.J."/>
            <person name="Becker A."/>
            <person name="Boistard P."/>
            <person name="Bothe G."/>
            <person name="Boutry M."/>
            <person name="Bowser L."/>
            <person name="Buhrmester J."/>
            <person name="Cadieu E."/>
            <person name="Capela D."/>
            <person name="Chain P."/>
            <person name="Cowie A."/>
            <person name="Davis R.W."/>
            <person name="Dreano S."/>
            <person name="Federspiel N.A."/>
            <person name="Fisher R.F."/>
            <person name="Gloux S."/>
            <person name="Godrie T."/>
            <person name="Goffeau A."/>
            <person name="Golding B."/>
            <person name="Gouzy J."/>
            <person name="Gurjal M."/>
            <person name="Hernandez-Lucas I."/>
            <person name="Hong A."/>
            <person name="Huizar L."/>
            <person name="Hyman R.W."/>
            <person name="Jones T."/>
            <person name="Kahn D."/>
            <person name="Kahn M.L."/>
            <person name="Kalman S."/>
            <person name="Keating D.H."/>
            <person name="Kiss E."/>
            <person name="Komp C."/>
            <person name="Lelaure V."/>
            <person name="Masuy D."/>
            <person name="Palm C."/>
            <person name="Peck M.C."/>
            <person name="Pohl T.M."/>
            <person name="Portetelle D."/>
            <person name="Purnelle B."/>
            <person name="Ramsperger U."/>
            <person name="Surzycki R."/>
            <person name="Thebault P."/>
            <person name="Vandenbol M."/>
            <person name="Vorhoelter F.J."/>
            <person name="Weidner S."/>
            <person name="Wells D.H."/>
            <person name="Wong K."/>
            <person name="Yeh K.-C."/>
            <person name="Batut J."/>
        </authorList>
    </citation>
    <scope>NUCLEOTIDE SEQUENCE [LARGE SCALE GENOMIC DNA]</scope>
    <source>
        <strain>1021</strain>
    </source>
</reference>
<sequence>MNIKWLGHSAFHIETAKAKILIDPFFTGNPAFRDEERKAATAGLTHILLTHGHGDHVGDTVAIAKETGATVLANFDLCMWLGRQGISKLEPGNTGGTIQLGSFTATFVNALHSSAQITDDGVSHSLGNANGLVLHFDDEPTLYHMGDTEIFSDMALVQELHEPEIGIVPIGDRFTMGGAVAALACQRYFKFNTTIPCHYGSFPIIDQTPETFIAGMDGASTLVATPEVGGAVTL</sequence>
<dbReference type="EMBL" id="AL591688">
    <property type="protein sequence ID" value="CAC45889.1"/>
    <property type="molecule type" value="Genomic_DNA"/>
</dbReference>
<dbReference type="RefSeq" id="NP_385416.1">
    <property type="nucleotide sequence ID" value="NC_003047.1"/>
</dbReference>
<dbReference type="RefSeq" id="WP_010969172.1">
    <property type="nucleotide sequence ID" value="NC_003047.1"/>
</dbReference>
<dbReference type="SMR" id="Q92QK9"/>
<dbReference type="EnsemblBacteria" id="CAC45889">
    <property type="protein sequence ID" value="CAC45889"/>
    <property type="gene ID" value="SMc01354"/>
</dbReference>
<dbReference type="KEGG" id="sme:SMc01354"/>
<dbReference type="PATRIC" id="fig|266834.11.peg.2724"/>
<dbReference type="eggNOG" id="COG2220">
    <property type="taxonomic scope" value="Bacteria"/>
</dbReference>
<dbReference type="HOGENOM" id="CLU_070010_4_0_5"/>
<dbReference type="OrthoDB" id="9789133at2"/>
<dbReference type="Proteomes" id="UP000001976">
    <property type="component" value="Chromosome"/>
</dbReference>
<dbReference type="GO" id="GO:0016787">
    <property type="term" value="F:hydrolase activity"/>
    <property type="evidence" value="ECO:0007669"/>
    <property type="project" value="UniProtKB-UniRule"/>
</dbReference>
<dbReference type="Gene3D" id="3.60.15.10">
    <property type="entry name" value="Ribonuclease Z/Hydroxyacylglutathione hydrolase-like"/>
    <property type="match status" value="1"/>
</dbReference>
<dbReference type="HAMAP" id="MF_00457">
    <property type="entry name" value="UPF0173"/>
    <property type="match status" value="1"/>
</dbReference>
<dbReference type="InterPro" id="IPR001279">
    <property type="entry name" value="Metallo-B-lactamas"/>
</dbReference>
<dbReference type="InterPro" id="IPR036866">
    <property type="entry name" value="RibonucZ/Hydroxyglut_hydro"/>
</dbReference>
<dbReference type="InterPro" id="IPR022877">
    <property type="entry name" value="UPF0173"/>
</dbReference>
<dbReference type="InterPro" id="IPR050114">
    <property type="entry name" value="UPF0173_UPF0282_UlaG_hydrolase"/>
</dbReference>
<dbReference type="NCBIfam" id="NF001911">
    <property type="entry name" value="PRK00685.1"/>
    <property type="match status" value="1"/>
</dbReference>
<dbReference type="PANTHER" id="PTHR43546:SF3">
    <property type="entry name" value="UPF0173 METAL-DEPENDENT HYDROLASE MJ1163"/>
    <property type="match status" value="1"/>
</dbReference>
<dbReference type="PANTHER" id="PTHR43546">
    <property type="entry name" value="UPF0173 METAL-DEPENDENT HYDROLASE MJ1163-RELATED"/>
    <property type="match status" value="1"/>
</dbReference>
<dbReference type="Pfam" id="PF12706">
    <property type="entry name" value="Lactamase_B_2"/>
    <property type="match status" value="1"/>
</dbReference>
<dbReference type="SMART" id="SM00849">
    <property type="entry name" value="Lactamase_B"/>
    <property type="match status" value="1"/>
</dbReference>
<dbReference type="SUPFAM" id="SSF56281">
    <property type="entry name" value="Metallo-hydrolase/oxidoreductase"/>
    <property type="match status" value="1"/>
</dbReference>
<proteinExistence type="inferred from homology"/>
<gene>
    <name type="ordered locus">R01310</name>
    <name type="ORF">SMc01354</name>
</gene>